<protein>
    <recommendedName>
        <fullName evidence="12">Regulator of nonsense transcripts UPF3</fullName>
    </recommendedName>
    <alternativeName>
        <fullName evidence="12">Nonsense mRNA reducing factor UPF3</fullName>
    </alternativeName>
    <alternativeName>
        <fullName evidence="12">Up-frameshift suppressor 3 homolog</fullName>
        <shortName evidence="11">AtUpf3</shortName>
    </alternativeName>
</protein>
<sequence>MKEPLQKKKVVVRHLPPSLSQSDLLSQIDPRFADRYNWVSFRPGKSSYKNQKYSRAYVSFKAPEDVYEFAAFFNGHVFVNEKGAQFKAIVEYAPSQRVPKPSDKKDPREGSISKDPDYLEFLKVIAQPVENLPSAEIQLERREAEQSGASKAAPIVTPLMEFIRQKRATVMGPQGLSDIRRGGRRTRVVSANKPSPRPSKRNSEKKKYVEKESSKNVPRKTTADVSSSKPDYRQSNSSGKELPGNETAAIIDSSPPGIALTMDSGKKKILLLRSKDRDNPDNPPPQPEQHIDTNLSRNSTDSRQNQKSDVGGRLIKGILLRNDSRPSQSSTFVQSEQRVEPSEAENYKRPSRPANTRAGKDYHTSGTISEKQERRTRNKDRPDRVMWAPRRDGSEDQPLSSAGNNGEVKDRMFSQRSGEVVNSSGGHTLENGSARHSSRRVGGRNRKEEVVIGEGKTSRRGSGGGPSSHEKQMWIQKPSSGT</sequence>
<accession>Q9FVW4</accession>
<accession>B3H5N7</accession>
<accession>Q9FX10</accession>
<evidence type="ECO:0000250" key="1"/>
<evidence type="ECO:0000256" key="2">
    <source>
        <dbReference type="SAM" id="MobiDB-lite"/>
    </source>
</evidence>
<evidence type="ECO:0000269" key="3">
    <source>
    </source>
</evidence>
<evidence type="ECO:0000269" key="4">
    <source>
    </source>
</evidence>
<evidence type="ECO:0000269" key="5">
    <source>
    </source>
</evidence>
<evidence type="ECO:0000269" key="6">
    <source>
    </source>
</evidence>
<evidence type="ECO:0000269" key="7">
    <source>
    </source>
</evidence>
<evidence type="ECO:0000269" key="8">
    <source>
    </source>
</evidence>
<evidence type="ECO:0000269" key="9">
    <source>
    </source>
</evidence>
<evidence type="ECO:0000269" key="10">
    <source>
    </source>
</evidence>
<evidence type="ECO:0000303" key="11">
    <source>
    </source>
</evidence>
<evidence type="ECO:0000305" key="12"/>
<evidence type="ECO:0000312" key="13">
    <source>
        <dbReference type="Araport" id="AT1G33980"/>
    </source>
</evidence>
<evidence type="ECO:0000312" key="14">
    <source>
        <dbReference type="EMBL" id="AAG12537.1"/>
    </source>
</evidence>
<evidence type="ECO:0000312" key="15">
    <source>
        <dbReference type="EMBL" id="AAG12847.1"/>
    </source>
</evidence>
<keyword id="KW-0025">Alternative splicing</keyword>
<keyword id="KW-0963">Cytoplasm</keyword>
<keyword id="KW-0509">mRNA transport</keyword>
<keyword id="KW-0866">Nonsense-mediated mRNA decay</keyword>
<keyword id="KW-0539">Nucleus</keyword>
<keyword id="KW-0611">Plant defense</keyword>
<keyword id="KW-1185">Reference proteome</keyword>
<keyword id="KW-0694">RNA-binding</keyword>
<keyword id="KW-0813">Transport</keyword>
<comment type="function">
    <text evidence="1 3 4 6 7 8 9">Recruits UPF2 at the cytoplasmic side of the nuclear envelope and the subsequent formation of an UPF1-UPF2-UPF3 surveillance complex (including UPF1 bound to release factors at the stalled ribosome) is believed to activate NMD. Binds spliced mRNA upstream of exon-exon junctions (By similarity). Involved in nonsense-mediated decay (NMD) of mRNAs containing premature stop codons (premature termination codon PTC) by associating with the nuclear exon junction complex (EJC) and serving as link between the EJC core and NMD machinery. Eliminates the production of nonsense-containing RNAs (ncRNAs). Required for plant development and adaptation to environmental stresses, including plant defense and response to wounding.</text>
</comment>
<comment type="subunit">
    <text evidence="1 10">Found in a post-splicing messenger ribonucleoprotein (mRNP) complex. Associates with the exon junction complex (EJC). Interacts with CPL1/FRY2 (PubMed:26887918).</text>
</comment>
<comment type="subcellular location">
    <subcellularLocation>
        <location evidence="5">Nucleus</location>
        <location evidence="5">Nucleolus</location>
    </subcellularLocation>
    <subcellularLocation>
        <location evidence="10">Nucleus</location>
    </subcellularLocation>
    <subcellularLocation>
        <location evidence="1">Cytoplasm</location>
    </subcellularLocation>
    <text evidence="1">Shuttling between the nucleus and the cytoplasm.</text>
</comment>
<comment type="alternative products">
    <event type="alternative splicing"/>
    <isoform>
        <id>Q9FVW4-1</id>
        <name>1</name>
        <sequence type="displayed"/>
    </isoform>
    <isoform>
        <id>Q9FVW4-2</id>
        <name>2</name>
        <sequence type="described" ref="VSP_046161"/>
    </isoform>
</comment>
<comment type="induction">
    <text evidence="7">Down-regulated upon Pseudomonas syringae pv. tomato strain DC3000 infection.</text>
</comment>
<comment type="disruption phenotype">
    <text evidence="3 4 6 7 8 9">Seedling lethal. Reduced ability to degrade mRNAs with premature termination codons (PTC). Increased expression of not only protein-coding transcripts but also many mRNA-like nonprotein-coding RNAs (mlncRNAs), including natural antisense transcript RNAs (nat-RNAs). Dwarf with curly leaves and late flowering. Photoperiod-dependent altered development and stress responses; in long days (16 hours light), altered organ morphologies (e.g. narrow and epinastic leaves with wide petiole, small rosette size, long seeds, some abnormal flowers and stunted stem growth), disturbed homeostasis of wounding-induced jasmonic acid and pathogen-elicited salicylic acid. Increased resistance to Pseudomonas syringae pv. tomato strain DC3000.</text>
</comment>
<comment type="similarity">
    <text evidence="12">Belongs to the RENT3 family.</text>
</comment>
<comment type="sequence caution" evidence="12">
    <conflict type="erroneous gene model prediction">
        <sequence resource="EMBL-CDS" id="AAG12537"/>
    </conflict>
</comment>
<reference key="1">
    <citation type="journal article" date="2000" name="Nature">
        <title>Sequence and analysis of chromosome 1 of the plant Arabidopsis thaliana.</title>
        <authorList>
            <person name="Theologis A."/>
            <person name="Ecker J.R."/>
            <person name="Palm C.J."/>
            <person name="Federspiel N.A."/>
            <person name="Kaul S."/>
            <person name="White O."/>
            <person name="Alonso J."/>
            <person name="Altafi H."/>
            <person name="Araujo R."/>
            <person name="Bowman C.L."/>
            <person name="Brooks S.Y."/>
            <person name="Buehler E."/>
            <person name="Chan A."/>
            <person name="Chao Q."/>
            <person name="Chen H."/>
            <person name="Cheuk R.F."/>
            <person name="Chin C.W."/>
            <person name="Chung M.K."/>
            <person name="Conn L."/>
            <person name="Conway A.B."/>
            <person name="Conway A.R."/>
            <person name="Creasy T.H."/>
            <person name="Dewar K."/>
            <person name="Dunn P."/>
            <person name="Etgu P."/>
            <person name="Feldblyum T.V."/>
            <person name="Feng J.-D."/>
            <person name="Fong B."/>
            <person name="Fujii C.Y."/>
            <person name="Gill J.E."/>
            <person name="Goldsmith A.D."/>
            <person name="Haas B."/>
            <person name="Hansen N.F."/>
            <person name="Hughes B."/>
            <person name="Huizar L."/>
            <person name="Hunter J.L."/>
            <person name="Jenkins J."/>
            <person name="Johnson-Hopson C."/>
            <person name="Khan S."/>
            <person name="Khaykin E."/>
            <person name="Kim C.J."/>
            <person name="Koo H.L."/>
            <person name="Kremenetskaia I."/>
            <person name="Kurtz D.B."/>
            <person name="Kwan A."/>
            <person name="Lam B."/>
            <person name="Langin-Hooper S."/>
            <person name="Lee A."/>
            <person name="Lee J.M."/>
            <person name="Lenz C.A."/>
            <person name="Li J.H."/>
            <person name="Li Y.-P."/>
            <person name="Lin X."/>
            <person name="Liu S.X."/>
            <person name="Liu Z.A."/>
            <person name="Luros J.S."/>
            <person name="Maiti R."/>
            <person name="Marziali A."/>
            <person name="Militscher J."/>
            <person name="Miranda M."/>
            <person name="Nguyen M."/>
            <person name="Nierman W.C."/>
            <person name="Osborne B.I."/>
            <person name="Pai G."/>
            <person name="Peterson J."/>
            <person name="Pham P.K."/>
            <person name="Rizzo M."/>
            <person name="Rooney T."/>
            <person name="Rowley D."/>
            <person name="Sakano H."/>
            <person name="Salzberg S.L."/>
            <person name="Schwartz J.R."/>
            <person name="Shinn P."/>
            <person name="Southwick A.M."/>
            <person name="Sun H."/>
            <person name="Tallon L.J."/>
            <person name="Tambunga G."/>
            <person name="Toriumi M.J."/>
            <person name="Town C.D."/>
            <person name="Utterback T."/>
            <person name="Van Aken S."/>
            <person name="Vaysberg M."/>
            <person name="Vysotskaia V.S."/>
            <person name="Walker M."/>
            <person name="Wu D."/>
            <person name="Yu G."/>
            <person name="Fraser C.M."/>
            <person name="Venter J.C."/>
            <person name="Davis R.W."/>
        </authorList>
    </citation>
    <scope>NUCLEOTIDE SEQUENCE [LARGE SCALE GENOMIC DNA]</scope>
    <source>
        <strain>cv. Columbia</strain>
    </source>
</reference>
<reference key="2">
    <citation type="journal article" date="2017" name="Plant J.">
        <title>Araport11: a complete reannotation of the Arabidopsis thaliana reference genome.</title>
        <authorList>
            <person name="Cheng C.Y."/>
            <person name="Krishnakumar V."/>
            <person name="Chan A.P."/>
            <person name="Thibaud-Nissen F."/>
            <person name="Schobel S."/>
            <person name="Town C.D."/>
        </authorList>
    </citation>
    <scope>GENOME REANNOTATION</scope>
    <source>
        <strain>cv. Columbia</strain>
    </source>
</reference>
<reference key="3">
    <citation type="journal article" date="2003" name="Science">
        <title>Empirical analysis of transcriptional activity in the Arabidopsis genome.</title>
        <authorList>
            <person name="Yamada K."/>
            <person name="Lim J."/>
            <person name="Dale J.M."/>
            <person name="Chen H."/>
            <person name="Shinn P."/>
            <person name="Palm C.J."/>
            <person name="Southwick A.M."/>
            <person name="Wu H.C."/>
            <person name="Kim C.J."/>
            <person name="Nguyen M."/>
            <person name="Pham P.K."/>
            <person name="Cheuk R.F."/>
            <person name="Karlin-Newmann G."/>
            <person name="Liu S.X."/>
            <person name="Lam B."/>
            <person name="Sakano H."/>
            <person name="Wu T."/>
            <person name="Yu G."/>
            <person name="Miranda M."/>
            <person name="Quach H.L."/>
            <person name="Tripp M."/>
            <person name="Chang C.H."/>
            <person name="Lee J.M."/>
            <person name="Toriumi M.J."/>
            <person name="Chan M.M."/>
            <person name="Tang C.C."/>
            <person name="Onodera C.S."/>
            <person name="Deng J.M."/>
            <person name="Akiyama K."/>
            <person name="Ansari Y."/>
            <person name="Arakawa T."/>
            <person name="Banh J."/>
            <person name="Banno F."/>
            <person name="Bowser L."/>
            <person name="Brooks S.Y."/>
            <person name="Carninci P."/>
            <person name="Chao Q."/>
            <person name="Choy N."/>
            <person name="Enju A."/>
            <person name="Goldsmith A.D."/>
            <person name="Gurjal M."/>
            <person name="Hansen N.F."/>
            <person name="Hayashizaki Y."/>
            <person name="Johnson-Hopson C."/>
            <person name="Hsuan V.W."/>
            <person name="Iida K."/>
            <person name="Karnes M."/>
            <person name="Khan S."/>
            <person name="Koesema E."/>
            <person name="Ishida J."/>
            <person name="Jiang P.X."/>
            <person name="Jones T."/>
            <person name="Kawai J."/>
            <person name="Kamiya A."/>
            <person name="Meyers C."/>
            <person name="Nakajima M."/>
            <person name="Narusaka M."/>
            <person name="Seki M."/>
            <person name="Sakurai T."/>
            <person name="Satou M."/>
            <person name="Tamse R."/>
            <person name="Vaysberg M."/>
            <person name="Wallender E.K."/>
            <person name="Wong C."/>
            <person name="Yamamura Y."/>
            <person name="Yuan S."/>
            <person name="Shinozaki K."/>
            <person name="Davis R.W."/>
            <person name="Theologis A."/>
            <person name="Ecker J.R."/>
        </authorList>
    </citation>
    <scope>NUCLEOTIDE SEQUENCE [LARGE SCALE MRNA]</scope>
    <source>
        <strain>cv. Columbia</strain>
    </source>
</reference>
<reference key="4">
    <citation type="journal article" date="2005" name="Plant J.">
        <title>UPF3 suppresses aberrant spliced mRNA in Arabidopsis.</title>
        <authorList>
            <person name="Hori K."/>
            <person name="Watanabe Y."/>
        </authorList>
    </citation>
    <scope>FUNCTION</scope>
    <scope>DISRUPTION PHENOTYPE</scope>
</reference>
<reference key="5">
    <citation type="journal article" date="2009" name="Plant Cell">
        <title>Aberrant mRNA transcripts and the nonsense-mediated decay proteins UPF2 and UPF3 are enriched in the Arabidopsis nucleolus.</title>
        <authorList>
            <person name="Kim S.H."/>
            <person name="Koroleva O.A."/>
            <person name="Lewandowska D."/>
            <person name="Pendle A.F."/>
            <person name="Clark G.P."/>
            <person name="Simpson C.G."/>
            <person name="Shaw P.J."/>
            <person name="Brown J.W.S."/>
        </authorList>
    </citation>
    <scope>SUBCELLULAR LOCATION</scope>
</reference>
<reference key="6">
    <citation type="journal article" date="2009" name="Plant Physiol.">
        <title>Large-scale Arabidopsis phosphoproteome profiling reveals novel chloroplast kinase substrates and phosphorylation networks.</title>
        <authorList>
            <person name="Reiland S."/>
            <person name="Messerli G."/>
            <person name="Baerenfaller K."/>
            <person name="Gerrits B."/>
            <person name="Endler A."/>
            <person name="Grossmann J."/>
            <person name="Gruissem W."/>
            <person name="Baginsky S."/>
        </authorList>
    </citation>
    <scope>IDENTIFICATION BY MASS SPECTROMETRY [LARGE SCALE ANALYSIS]</scope>
</reference>
<reference key="7">
    <citation type="journal article" date="2009" name="Proc. Natl. Acad. Sci. U.S.A.">
        <title>Genome-wide suppression of aberrant mRNA-like noncoding RNAs by NMD in Arabidopsis.</title>
        <authorList>
            <person name="Kurihara Y."/>
            <person name="Matsui A."/>
            <person name="Hanada K."/>
            <person name="Kawashima M."/>
            <person name="Ishida J."/>
            <person name="Morosawa T."/>
            <person name="Tanaka M."/>
            <person name="Kaminuma E."/>
            <person name="Mochizuki Y."/>
            <person name="Matsushima A."/>
            <person name="Toyoda T."/>
            <person name="Shinozaki K."/>
            <person name="Seki M."/>
        </authorList>
    </citation>
    <scope>FUNCTION</scope>
    <scope>DISRUPTION PHENOTYPE</scope>
</reference>
<reference key="8">
    <citation type="journal article" date="2010" name="New Phytol.">
        <title>Extensive coupling of alternative splicing of pre-mRNAs of serine/arginine (SR) genes with nonsense-mediated decay.</title>
        <authorList>
            <person name="Palusa S.G."/>
            <person name="Reddy A.S."/>
        </authorList>
    </citation>
    <scope>FUNCTION</scope>
    <scope>DISRUPTION PHENOTYPE</scope>
    <source>
        <strain>cv. Columbia</strain>
    </source>
</reference>
<reference key="9">
    <citation type="journal article" date="2011" name="Plant Cell Physiol.">
        <title>Nonsense-mediated mRNA decay factors, UPF1 and UPF3, contribute to plant defense.</title>
        <authorList>
            <person name="Jeong H.-J."/>
            <person name="Kim Y.J."/>
            <person name="Kim S.H."/>
            <person name="Kim Y.-H."/>
            <person name="Lee I.-J."/>
            <person name="Kim Y.K."/>
            <person name="Shin J.S."/>
        </authorList>
    </citation>
    <scope>FUNCTION</scope>
    <scope>DISRUPTION PHENOTYPE</scope>
    <scope>DOWN-REGULATION BY PSEUDOMONAS SYRINGAE</scope>
    <source>
        <strain>cv. Columbia</strain>
    </source>
</reference>
<reference key="10">
    <citation type="journal article" date="2012" name="J. Integr. Plant Biol.">
        <title>Arabidopsis plants having defects in nonsense-mediated mRNA decay factors UPF1, UPF2, and UPF3 show photoperiod-dependent phenotypes in development and stress responses.</title>
        <authorList>
            <person name="Shi C."/>
            <person name="Baldwin I.T."/>
            <person name="Wu J."/>
        </authorList>
    </citation>
    <scope>FUNCTION</scope>
    <scope>DISRUPTION PHENOTYPE</scope>
    <source>
        <strain>cv. Columbia</strain>
    </source>
</reference>
<reference key="11">
    <citation type="journal article" date="2012" name="Nucleic Acids Res.">
        <title>Alternative splicing and nonsense-mediated decay modulate expression of important regulatory genes in Arabidopsis.</title>
        <authorList>
            <person name="Kalyna M."/>
            <person name="Simpson C.G."/>
            <person name="Syed N.H."/>
            <person name="Lewandowska D."/>
            <person name="Marquez Y."/>
            <person name="Kusenda B."/>
            <person name="Marshall J."/>
            <person name="Fuller J."/>
            <person name="Cardle L."/>
            <person name="McNicol J."/>
            <person name="Dinh H.Q."/>
            <person name="Barta A."/>
            <person name="Brown J.W.S."/>
        </authorList>
    </citation>
    <scope>FUNCTION</scope>
    <scope>DISRUPTION PHENOTYPE</scope>
    <source>
        <strain>cv. Columbia</strain>
    </source>
</reference>
<reference key="12">
    <citation type="journal article" date="2016" name="Plant Cell">
        <title>The RNA polymerase II C-terminal domain phosphatase-like protein FIERY2/CPL1 interacts with eIF4AIII and is essential for nonsense-mediated mrna decay in Arabidopsis.</title>
        <authorList>
            <person name="Cui P."/>
            <person name="Chen T."/>
            <person name="Qin T."/>
            <person name="Ding F."/>
            <person name="Wang Z."/>
            <person name="Chen H."/>
            <person name="Xiong L."/>
        </authorList>
    </citation>
    <scope>INTERACTION WITH CPL1/FRY2</scope>
    <scope>SUBCELLULAR LOCATION</scope>
</reference>
<gene>
    <name evidence="11" type="primary">UPF3</name>
    <name evidence="13" type="ordered locus">At1g33980</name>
    <name evidence="14" type="ORF">F12G12.20</name>
    <name evidence="15" type="ORF">T15K4.3</name>
</gene>
<proteinExistence type="evidence at protein level"/>
<name>RENT3_ARATH</name>
<organism>
    <name type="scientific">Arabidopsis thaliana</name>
    <name type="common">Mouse-ear cress</name>
    <dbReference type="NCBI Taxonomy" id="3702"/>
    <lineage>
        <taxon>Eukaryota</taxon>
        <taxon>Viridiplantae</taxon>
        <taxon>Streptophyta</taxon>
        <taxon>Embryophyta</taxon>
        <taxon>Tracheophyta</taxon>
        <taxon>Spermatophyta</taxon>
        <taxon>Magnoliopsida</taxon>
        <taxon>eudicotyledons</taxon>
        <taxon>Gunneridae</taxon>
        <taxon>Pentapetalae</taxon>
        <taxon>rosids</taxon>
        <taxon>malvids</taxon>
        <taxon>Brassicales</taxon>
        <taxon>Brassicaceae</taxon>
        <taxon>Camelineae</taxon>
        <taxon>Arabidopsis</taxon>
    </lineage>
</organism>
<dbReference type="EMBL" id="AC015446">
    <property type="protein sequence ID" value="AAG12537.1"/>
    <property type="status" value="ALT_SEQ"/>
    <property type="molecule type" value="Genomic_DNA"/>
</dbReference>
<dbReference type="EMBL" id="AC079286">
    <property type="protein sequence ID" value="AAG12847.1"/>
    <property type="molecule type" value="Genomic_DNA"/>
</dbReference>
<dbReference type="EMBL" id="CP002684">
    <property type="protein sequence ID" value="AEE31653.1"/>
    <property type="molecule type" value="Genomic_DNA"/>
</dbReference>
<dbReference type="EMBL" id="CP002684">
    <property type="protein sequence ID" value="AEE31654.1"/>
    <property type="molecule type" value="Genomic_DNA"/>
</dbReference>
<dbReference type="EMBL" id="AY128383">
    <property type="protein sequence ID" value="AAM91586.1"/>
    <property type="molecule type" value="mRNA"/>
</dbReference>
<dbReference type="EMBL" id="BT000112">
    <property type="protein sequence ID" value="AAN15431.1"/>
    <property type="molecule type" value="mRNA"/>
</dbReference>
<dbReference type="PIR" id="E86463">
    <property type="entry name" value="E86463"/>
</dbReference>
<dbReference type="RefSeq" id="NP_001117406.1">
    <molecule id="Q9FVW4-2"/>
    <property type="nucleotide sequence ID" value="NM_001123934.1"/>
</dbReference>
<dbReference type="RefSeq" id="NP_174660.2">
    <molecule id="Q9FVW4-1"/>
    <property type="nucleotide sequence ID" value="NM_103120.4"/>
</dbReference>
<dbReference type="SMR" id="Q9FVW4"/>
<dbReference type="FunCoup" id="Q9FVW4">
    <property type="interactions" value="1220"/>
</dbReference>
<dbReference type="STRING" id="3702.Q9FVW4"/>
<dbReference type="iPTMnet" id="Q9FVW4"/>
<dbReference type="PaxDb" id="3702-AT1G33980.2"/>
<dbReference type="ProteomicsDB" id="225963">
    <molecule id="Q9FVW4-1"/>
</dbReference>
<dbReference type="EnsemblPlants" id="AT1G33980.1">
    <molecule id="Q9FVW4-1"/>
    <property type="protein sequence ID" value="AT1G33980.1"/>
    <property type="gene ID" value="AT1G33980"/>
</dbReference>
<dbReference type="EnsemblPlants" id="AT1G33980.2">
    <molecule id="Q9FVW4-2"/>
    <property type="protein sequence ID" value="AT1G33980.2"/>
    <property type="gene ID" value="AT1G33980"/>
</dbReference>
<dbReference type="GeneID" id="840295"/>
<dbReference type="Gramene" id="AT1G33980.1">
    <molecule id="Q9FVW4-1"/>
    <property type="protein sequence ID" value="AT1G33980.1"/>
    <property type="gene ID" value="AT1G33980"/>
</dbReference>
<dbReference type="Gramene" id="AT1G33980.2">
    <molecule id="Q9FVW4-2"/>
    <property type="protein sequence ID" value="AT1G33980.2"/>
    <property type="gene ID" value="AT1G33980"/>
</dbReference>
<dbReference type="KEGG" id="ath:AT1G33980"/>
<dbReference type="Araport" id="AT1G33980"/>
<dbReference type="TAIR" id="AT1G33980">
    <property type="gene designation" value="UPF3"/>
</dbReference>
<dbReference type="eggNOG" id="KOG1295">
    <property type="taxonomic scope" value="Eukaryota"/>
</dbReference>
<dbReference type="HOGENOM" id="CLU_023010_1_0_1"/>
<dbReference type="InParanoid" id="Q9FVW4"/>
<dbReference type="OMA" id="HKHQRYS"/>
<dbReference type="PhylomeDB" id="Q9FVW4"/>
<dbReference type="CD-CODE" id="4299E36E">
    <property type="entry name" value="Nucleolus"/>
</dbReference>
<dbReference type="PRO" id="PR:Q9FVW4"/>
<dbReference type="Proteomes" id="UP000006548">
    <property type="component" value="Chromosome 1"/>
</dbReference>
<dbReference type="ExpressionAtlas" id="Q9FVW4">
    <property type="expression patterns" value="baseline and differential"/>
</dbReference>
<dbReference type="GO" id="GO:0005737">
    <property type="term" value="C:cytoplasm"/>
    <property type="evidence" value="ECO:0007669"/>
    <property type="project" value="UniProtKB-SubCell"/>
</dbReference>
<dbReference type="GO" id="GO:0005730">
    <property type="term" value="C:nucleolus"/>
    <property type="evidence" value="ECO:0000314"/>
    <property type="project" value="UniProtKB"/>
</dbReference>
<dbReference type="GO" id="GO:0005634">
    <property type="term" value="C:nucleus"/>
    <property type="evidence" value="ECO:0007005"/>
    <property type="project" value="TAIR"/>
</dbReference>
<dbReference type="GO" id="GO:0003729">
    <property type="term" value="F:mRNA binding"/>
    <property type="evidence" value="ECO:0007005"/>
    <property type="project" value="TAIR"/>
</dbReference>
<dbReference type="GO" id="GO:0042742">
    <property type="term" value="P:defense response to bacterium"/>
    <property type="evidence" value="ECO:0000315"/>
    <property type="project" value="UniProtKB"/>
</dbReference>
<dbReference type="GO" id="GO:0009867">
    <property type="term" value="P:jasmonic acid mediated signaling pathway"/>
    <property type="evidence" value="ECO:0000315"/>
    <property type="project" value="UniProtKB"/>
</dbReference>
<dbReference type="GO" id="GO:0048571">
    <property type="term" value="P:long-day photoperiodism"/>
    <property type="evidence" value="ECO:0000315"/>
    <property type="project" value="UniProtKB"/>
</dbReference>
<dbReference type="GO" id="GO:0051028">
    <property type="term" value="P:mRNA transport"/>
    <property type="evidence" value="ECO:0007669"/>
    <property type="project" value="UniProtKB-KW"/>
</dbReference>
<dbReference type="GO" id="GO:0000184">
    <property type="term" value="P:nuclear-transcribed mRNA catabolic process, nonsense-mediated decay"/>
    <property type="evidence" value="ECO:0000315"/>
    <property type="project" value="UniProtKB"/>
</dbReference>
<dbReference type="GO" id="GO:0009611">
    <property type="term" value="P:response to wounding"/>
    <property type="evidence" value="ECO:0000315"/>
    <property type="project" value="UniProtKB"/>
</dbReference>
<dbReference type="GO" id="GO:0009863">
    <property type="term" value="P:salicylic acid mediated signaling pathway"/>
    <property type="evidence" value="ECO:0000315"/>
    <property type="project" value="UniProtKB"/>
</dbReference>
<dbReference type="CDD" id="cd12455">
    <property type="entry name" value="RRM_like_Smg4_UPF3"/>
    <property type="match status" value="1"/>
</dbReference>
<dbReference type="FunFam" id="3.30.70.330:FF:000255">
    <property type="entry name" value="Regulator of nonsense transcripts UPF3"/>
    <property type="match status" value="1"/>
</dbReference>
<dbReference type="Gene3D" id="3.30.70.330">
    <property type="match status" value="1"/>
</dbReference>
<dbReference type="InterPro" id="IPR012677">
    <property type="entry name" value="Nucleotide-bd_a/b_plait_sf"/>
</dbReference>
<dbReference type="InterPro" id="IPR035979">
    <property type="entry name" value="RBD_domain_sf"/>
</dbReference>
<dbReference type="InterPro" id="IPR039722">
    <property type="entry name" value="Upf3"/>
</dbReference>
<dbReference type="InterPro" id="IPR005120">
    <property type="entry name" value="UPF3_dom"/>
</dbReference>
<dbReference type="PANTHER" id="PTHR13112:SF5">
    <property type="entry name" value="REGULATOR OF NONSENSE TRANSCRIPTS UPF3"/>
    <property type="match status" value="1"/>
</dbReference>
<dbReference type="PANTHER" id="PTHR13112">
    <property type="entry name" value="UPF3 REGULATOR OF NONSENSE TRANSCRIPTS-LIKE PROTEIN"/>
    <property type="match status" value="1"/>
</dbReference>
<dbReference type="Pfam" id="PF03467">
    <property type="entry name" value="Smg4_UPF3"/>
    <property type="match status" value="1"/>
</dbReference>
<dbReference type="SUPFAM" id="SSF54928">
    <property type="entry name" value="RNA-binding domain, RBD"/>
    <property type="match status" value="1"/>
</dbReference>
<feature type="chain" id="PRO_0000421875" description="Regulator of nonsense transcripts UPF3">
    <location>
        <begin position="1"/>
        <end position="482"/>
    </location>
</feature>
<feature type="region of interest" description="Necessary for interaction with UPF2">
    <location>
        <begin position="9"/>
        <end position="219"/>
    </location>
</feature>
<feature type="region of interest" description="Binds to UPF2" evidence="1">
    <location>
        <begin position="9"/>
        <end position="14"/>
    </location>
</feature>
<feature type="region of interest" description="Sufficient for association with EJC core" evidence="1">
    <location>
        <begin position="53"/>
        <end position="482"/>
    </location>
</feature>
<feature type="region of interest" description="Disordered" evidence="2">
    <location>
        <begin position="173"/>
        <end position="482"/>
    </location>
</feature>
<feature type="compositionally biased region" description="Basic and acidic residues" evidence="2">
    <location>
        <begin position="201"/>
        <end position="214"/>
    </location>
</feature>
<feature type="compositionally biased region" description="Polar residues" evidence="2">
    <location>
        <begin position="223"/>
        <end position="239"/>
    </location>
</feature>
<feature type="compositionally biased region" description="Polar residues" evidence="2">
    <location>
        <begin position="292"/>
        <end position="308"/>
    </location>
</feature>
<feature type="compositionally biased region" description="Polar residues" evidence="2">
    <location>
        <begin position="325"/>
        <end position="336"/>
    </location>
</feature>
<feature type="compositionally biased region" description="Basic and acidic residues" evidence="2">
    <location>
        <begin position="337"/>
        <end position="348"/>
    </location>
</feature>
<feature type="compositionally biased region" description="Basic and acidic residues" evidence="2">
    <location>
        <begin position="370"/>
        <end position="394"/>
    </location>
</feature>
<feature type="compositionally biased region" description="Polar residues" evidence="2">
    <location>
        <begin position="414"/>
        <end position="435"/>
    </location>
</feature>
<feature type="splice variant" id="VSP_046161" description="In isoform 2." evidence="12">
    <original>S</original>
    <variation>RLG</variation>
    <location>
        <position position="47"/>
    </location>
</feature>